<comment type="function">
    <text evidence="1 3">Transcriptional activator that binds to DNA sequences containing the consensus pentanucleotide 5'-CGGA[AT]-3' (By similarity). Required for olfactory dopaminergic neuron differentiation; may directly activate expression of tyrosine hydroxylase (TH) (By similarity).</text>
</comment>
<comment type="subcellular location">
    <subcellularLocation>
        <location evidence="4">Nucleus</location>
    </subcellularLocation>
</comment>
<comment type="PTM">
    <text evidence="3">Sumoylated.</text>
</comment>
<comment type="PTM">
    <text evidence="3">Phosphorylated at Ser-191 and Ser-216 by RPS6KA1 and RPS6KA5; phosphorylation activates transcriptional activity.</text>
</comment>
<comment type="similarity">
    <text evidence="6">Belongs to the ETS family.</text>
</comment>
<sequence>MDGFYDQQVPYMVTNNQRGRNCNEKPTNVRKRKFINRDLAHDSEELFQDLSQLQETWLAEAQVPDNDEQFVPDYQAESLAFHGLPLKIKKEPHSPCSELGSACSQEQPFKFSYGEKCLYNVSAYDQKPQVGMRPSNPPTPSSTPVSPLHHASPNSAHTSKPDRAFPAHLPPSQPIQDSSYPMDHRFRRQLSEPCNSFPPLPTMPREGRPMYQRQMSEPNIPFPPQGFKQEYHDPVYEHNTMVGGAASQSFPPPLMIKQEPRDFAYDSEVPSCHSIYMRQEGFLTHPSRTEGCMFEKGPRQFYDDTCVVPEKFDGDIKQEPGMYREGPTYQRRGSLQLWQFLVALLDDPSNSHFIAWTGRGMEFKLIEPEEVARRWGIQKNRPAMNYDKLSRSLRYYYEKGIMQKVAGERYVYKFVCDPEALFSMAFPDNQRPLLKTDMERHINEEDTVPLSHFDESMAYMPEGGCCNPHPYNEGYVY</sequence>
<feature type="chain" id="PRO_0000287133" description="ETS translocation variant 1">
    <location>
        <begin position="1"/>
        <end position="477"/>
    </location>
</feature>
<feature type="DNA-binding region" description="ETS" evidence="4">
    <location>
        <begin position="335"/>
        <end position="415"/>
    </location>
</feature>
<feature type="region of interest" description="Disordered" evidence="5">
    <location>
        <begin position="128"/>
        <end position="178"/>
    </location>
</feature>
<feature type="modified residue" description="Phosphoserine" evidence="2">
    <location>
        <position position="94"/>
    </location>
</feature>
<feature type="modified residue" description="Phosphoserine; by RPS6KA1 and RPS6KA5" evidence="3">
    <location>
        <position position="191"/>
    </location>
</feature>
<feature type="modified residue" description="Phosphoserine; by RPS6KA1 and RPS6KA5" evidence="3">
    <location>
        <position position="216"/>
    </location>
</feature>
<feature type="cross-link" description="Glycyl lysine isopeptide (Lys-Gly) (interchain with G-Cter in SUMO2)" evidence="3">
    <location>
        <position position="317"/>
    </location>
</feature>
<protein>
    <recommendedName>
        <fullName evidence="6">ETS translocation variant 1</fullName>
    </recommendedName>
</protein>
<keyword id="KW-0010">Activator</keyword>
<keyword id="KW-0238">DNA-binding</keyword>
<keyword id="KW-1017">Isopeptide bond</keyword>
<keyword id="KW-0539">Nucleus</keyword>
<keyword id="KW-0597">Phosphoprotein</keyword>
<keyword id="KW-1185">Reference proteome</keyword>
<keyword id="KW-0804">Transcription</keyword>
<keyword id="KW-0805">Transcription regulation</keyword>
<keyword id="KW-0832">Ubl conjugation</keyword>
<proteinExistence type="evidence at transcript level"/>
<reference key="1">
    <citation type="submission" date="2006-01" db="EMBL/GenBank/DDBJ databases">
        <authorList>
            <consortium name="NIH - Mammalian Gene Collection (MGC) project"/>
        </authorList>
    </citation>
    <scope>NUCLEOTIDE SEQUENCE [LARGE SCALE MRNA]</scope>
    <source>
        <strain>Hereford</strain>
        <tissue>Hypothalamus</tissue>
    </source>
</reference>
<gene>
    <name type="primary">ETV1</name>
</gene>
<evidence type="ECO:0000250" key="1">
    <source>
        <dbReference type="UniProtKB" id="P41164"/>
    </source>
</evidence>
<evidence type="ECO:0000250" key="2">
    <source>
        <dbReference type="UniProtKB" id="P43268"/>
    </source>
</evidence>
<evidence type="ECO:0000250" key="3">
    <source>
        <dbReference type="UniProtKB" id="P50549"/>
    </source>
</evidence>
<evidence type="ECO:0000255" key="4">
    <source>
        <dbReference type="PROSITE-ProRule" id="PRU00237"/>
    </source>
</evidence>
<evidence type="ECO:0000256" key="5">
    <source>
        <dbReference type="SAM" id="MobiDB-lite"/>
    </source>
</evidence>
<evidence type="ECO:0000305" key="6"/>
<dbReference type="EMBL" id="BC112692">
    <property type="protein sequence ID" value="AAI12693.1"/>
    <property type="molecule type" value="mRNA"/>
</dbReference>
<dbReference type="RefSeq" id="NP_001039957.1">
    <property type="nucleotide sequence ID" value="NM_001046492.2"/>
</dbReference>
<dbReference type="RefSeq" id="XP_005205260.1">
    <property type="nucleotide sequence ID" value="XM_005205203.5"/>
</dbReference>
<dbReference type="SMR" id="Q2KIC2"/>
<dbReference type="FunCoup" id="Q2KIC2">
    <property type="interactions" value="454"/>
</dbReference>
<dbReference type="STRING" id="9913.ENSBTAP00000064027"/>
<dbReference type="PaxDb" id="9913-ENSBTAP00000021259"/>
<dbReference type="GeneID" id="540846"/>
<dbReference type="KEGG" id="bta:540846"/>
<dbReference type="CTD" id="2115"/>
<dbReference type="VEuPathDB" id="HostDB:ENSBTAG00000015981"/>
<dbReference type="eggNOG" id="KOG3806">
    <property type="taxonomic scope" value="Eukaryota"/>
</dbReference>
<dbReference type="HOGENOM" id="CLU_030025_1_0_1"/>
<dbReference type="InParanoid" id="Q2KIC2"/>
<dbReference type="OMA" id="DYQAESX"/>
<dbReference type="OrthoDB" id="10067219at2759"/>
<dbReference type="TreeFam" id="TF316214"/>
<dbReference type="Proteomes" id="UP000009136">
    <property type="component" value="Chromosome 4"/>
</dbReference>
<dbReference type="Bgee" id="ENSBTAG00000015981">
    <property type="expression patterns" value="Expressed in saliva-secreting gland and 97 other cell types or tissues"/>
</dbReference>
<dbReference type="GO" id="GO:0005634">
    <property type="term" value="C:nucleus"/>
    <property type="evidence" value="ECO:0000318"/>
    <property type="project" value="GO_Central"/>
</dbReference>
<dbReference type="GO" id="GO:0000981">
    <property type="term" value="F:DNA-binding transcription factor activity, RNA polymerase II-specific"/>
    <property type="evidence" value="ECO:0000318"/>
    <property type="project" value="GO_Central"/>
</dbReference>
<dbReference type="GO" id="GO:0043565">
    <property type="term" value="F:sequence-specific DNA binding"/>
    <property type="evidence" value="ECO:0007669"/>
    <property type="project" value="InterPro"/>
</dbReference>
<dbReference type="GO" id="GO:0030154">
    <property type="term" value="P:cell differentiation"/>
    <property type="evidence" value="ECO:0000318"/>
    <property type="project" value="GO_Central"/>
</dbReference>
<dbReference type="GO" id="GO:0045893">
    <property type="term" value="P:positive regulation of DNA-templated transcription"/>
    <property type="evidence" value="ECO:0007669"/>
    <property type="project" value="UniProtKB-ARBA"/>
</dbReference>
<dbReference type="GO" id="GO:0006357">
    <property type="term" value="P:regulation of transcription by RNA polymerase II"/>
    <property type="evidence" value="ECO:0000318"/>
    <property type="project" value="GO_Central"/>
</dbReference>
<dbReference type="FunFam" id="1.10.10.10:FF:000121">
    <property type="entry name" value="ETS translocation variant 5"/>
    <property type="match status" value="1"/>
</dbReference>
<dbReference type="Gene3D" id="1.10.10.10">
    <property type="entry name" value="Winged helix-like DNA-binding domain superfamily/Winged helix DNA-binding domain"/>
    <property type="match status" value="1"/>
</dbReference>
<dbReference type="InterPro" id="IPR000418">
    <property type="entry name" value="Ets_dom"/>
</dbReference>
<dbReference type="InterPro" id="IPR046328">
    <property type="entry name" value="ETS_fam"/>
</dbReference>
<dbReference type="InterPro" id="IPR006715">
    <property type="entry name" value="ETS_PEA3_N"/>
</dbReference>
<dbReference type="InterPro" id="IPR036388">
    <property type="entry name" value="WH-like_DNA-bd_sf"/>
</dbReference>
<dbReference type="InterPro" id="IPR036390">
    <property type="entry name" value="WH_DNA-bd_sf"/>
</dbReference>
<dbReference type="PANTHER" id="PTHR11849">
    <property type="entry name" value="ETS"/>
    <property type="match status" value="1"/>
</dbReference>
<dbReference type="PANTHER" id="PTHR11849:SF196">
    <property type="entry name" value="ETS TRANSLOCATION VARIANT 1"/>
    <property type="match status" value="1"/>
</dbReference>
<dbReference type="Pfam" id="PF00178">
    <property type="entry name" value="Ets"/>
    <property type="match status" value="1"/>
</dbReference>
<dbReference type="Pfam" id="PF04621">
    <property type="entry name" value="ETS_PEA3_N"/>
    <property type="match status" value="1"/>
</dbReference>
<dbReference type="PRINTS" id="PR00454">
    <property type="entry name" value="ETSDOMAIN"/>
</dbReference>
<dbReference type="SMART" id="SM00413">
    <property type="entry name" value="ETS"/>
    <property type="match status" value="1"/>
</dbReference>
<dbReference type="SUPFAM" id="SSF46785">
    <property type="entry name" value="Winged helix' DNA-binding domain"/>
    <property type="match status" value="1"/>
</dbReference>
<dbReference type="PROSITE" id="PS00345">
    <property type="entry name" value="ETS_DOMAIN_1"/>
    <property type="match status" value="1"/>
</dbReference>
<dbReference type="PROSITE" id="PS00346">
    <property type="entry name" value="ETS_DOMAIN_2"/>
    <property type="match status" value="1"/>
</dbReference>
<dbReference type="PROSITE" id="PS50061">
    <property type="entry name" value="ETS_DOMAIN_3"/>
    <property type="match status" value="1"/>
</dbReference>
<name>ETV1_BOVIN</name>
<accession>Q2KIC2</accession>
<organism>
    <name type="scientific">Bos taurus</name>
    <name type="common">Bovine</name>
    <dbReference type="NCBI Taxonomy" id="9913"/>
    <lineage>
        <taxon>Eukaryota</taxon>
        <taxon>Metazoa</taxon>
        <taxon>Chordata</taxon>
        <taxon>Craniata</taxon>
        <taxon>Vertebrata</taxon>
        <taxon>Euteleostomi</taxon>
        <taxon>Mammalia</taxon>
        <taxon>Eutheria</taxon>
        <taxon>Laurasiatheria</taxon>
        <taxon>Artiodactyla</taxon>
        <taxon>Ruminantia</taxon>
        <taxon>Pecora</taxon>
        <taxon>Bovidae</taxon>
        <taxon>Bovinae</taxon>
        <taxon>Bos</taxon>
    </lineage>
</organism>